<feature type="chain" id="PRO_0000135040" description="Rubredoxin">
    <location>
        <begin position="1"/>
        <end position="52"/>
    </location>
</feature>
<feature type="domain" description="Rubredoxin-like" evidence="2">
    <location>
        <begin position="1"/>
        <end position="52"/>
    </location>
</feature>
<feature type="binding site" evidence="4">
    <location>
        <position position="6"/>
    </location>
    <ligand>
        <name>Fe cation</name>
        <dbReference type="ChEBI" id="CHEBI:24875"/>
    </ligand>
</feature>
<feature type="binding site" evidence="4">
    <location>
        <position position="9"/>
    </location>
    <ligand>
        <name>Fe cation</name>
        <dbReference type="ChEBI" id="CHEBI:24875"/>
    </ligand>
</feature>
<feature type="binding site" evidence="4">
    <location>
        <position position="39"/>
    </location>
    <ligand>
        <name>Fe cation</name>
        <dbReference type="ChEBI" id="CHEBI:24875"/>
    </ligand>
</feature>
<feature type="binding site" evidence="4">
    <location>
        <position position="42"/>
    </location>
    <ligand>
        <name>Fe cation</name>
        <dbReference type="ChEBI" id="CHEBI:24875"/>
    </ligand>
</feature>
<feature type="modified residue" description="N-formylmethionine; partial" evidence="3">
    <location>
        <position position="1"/>
    </location>
</feature>
<keyword id="KW-0903">Direct protein sequencing</keyword>
<keyword id="KW-0249">Electron transport</keyword>
<keyword id="KW-0291">Formylation</keyword>
<keyword id="KW-0408">Iron</keyword>
<keyword id="KW-0479">Metal-binding</keyword>
<keyword id="KW-0813">Transport</keyword>
<protein>
    <recommendedName>
        <fullName>Rubredoxin</fullName>
        <shortName>Rd</shortName>
    </recommendedName>
</protein>
<name>RUBR_HELMO</name>
<sequence length="52" mass="5619">MKKYGCLVCGYVYDPAKGDPDHGIAPGTAFEDLPADWVCPLCGVSKDEFEPL</sequence>
<proteinExistence type="evidence at protein level"/>
<comment type="function">
    <text>Rubredoxin is a small nonheme, iron protein lacking acid-labile sulfide. Its single Fe, chelated to 4 Cys, functions as an electron acceptor and may also stabilize the conformation of the molecule.</text>
</comment>
<comment type="cofactor">
    <cofactor evidence="1">
        <name>Fe(3+)</name>
        <dbReference type="ChEBI" id="CHEBI:29034"/>
    </cofactor>
    <text evidence="1">Binds 1 Fe(3+) ion per subunit.</text>
</comment>
<comment type="PTM">
    <text evidence="3">Observed in four forms, with and without iron, and with and without formylation at Met-1.</text>
</comment>
<comment type="mass spectrometry" mass="5623.6" method="MALDI" evidence="3">
    <text>Without formylation at Met-1, and without iron.</text>
</comment>
<comment type="mass spectrometry" mass="5651.4" method="MALDI" evidence="3">
    <text>With formylation at Met-1, and without iron.</text>
</comment>
<comment type="mass spectrometry" mass="5674.8" method="MALDI" evidence="3">
    <text>Without formylation at Met-1, and with iron.</text>
</comment>
<comment type="mass spectrometry" mass="5703.6" method="MALDI" evidence="3">
    <text>With formylation at Met-1, and with iron.</text>
</comment>
<comment type="similarity">
    <text evidence="4">Belongs to the rubredoxin family.</text>
</comment>
<reference key="1">
    <citation type="journal article" date="1995" name="Arch. Biochem. Biophys.">
        <title>Isolation, characterization, and primary structure of rubredoxin from the photosynthetic bacterium, Heliobacillus mobilis.</title>
        <authorList>
            <person name="Lee W.Y."/>
            <person name="Brune D.C."/>
            <person name="Lobrutto R."/>
            <person name="Blankenship R.E."/>
        </authorList>
    </citation>
    <scope>PROTEIN SEQUENCE</scope>
    <scope>MASS SPECTROMETRY</scope>
    <scope>IRON BINDING</scope>
    <scope>FORMYLATION AT MET-1</scope>
</reference>
<organism>
    <name type="scientific">Heliobacterium mobile</name>
    <name type="common">Heliobacillus mobilis</name>
    <dbReference type="NCBI Taxonomy" id="28064"/>
    <lineage>
        <taxon>Bacteria</taxon>
        <taxon>Bacillati</taxon>
        <taxon>Bacillota</taxon>
        <taxon>Clostridia</taxon>
        <taxon>Eubacteriales</taxon>
        <taxon>Heliobacteriaceae</taxon>
        <taxon>Heliobacterium</taxon>
    </lineage>
</organism>
<accession>P56263</accession>
<dbReference type="PIR" id="S65620">
    <property type="entry name" value="S65620"/>
</dbReference>
<dbReference type="RefSeq" id="WP_155475811.1">
    <property type="nucleotide sequence ID" value="NZ_WNKU01000005.1"/>
</dbReference>
<dbReference type="SMR" id="P56263"/>
<dbReference type="OrthoDB" id="9758182at2"/>
<dbReference type="GO" id="GO:0009055">
    <property type="term" value="F:electron transfer activity"/>
    <property type="evidence" value="ECO:0007669"/>
    <property type="project" value="InterPro"/>
</dbReference>
<dbReference type="GO" id="GO:0005506">
    <property type="term" value="F:iron ion binding"/>
    <property type="evidence" value="ECO:0007669"/>
    <property type="project" value="InterPro"/>
</dbReference>
<dbReference type="GO" id="GO:0043448">
    <property type="term" value="P:alkane catabolic process"/>
    <property type="evidence" value="ECO:0007669"/>
    <property type="project" value="TreeGrafter"/>
</dbReference>
<dbReference type="CDD" id="cd00730">
    <property type="entry name" value="rubredoxin"/>
    <property type="match status" value="1"/>
</dbReference>
<dbReference type="FunFam" id="2.20.28.10:FF:000001">
    <property type="entry name" value="Rubredoxin"/>
    <property type="match status" value="1"/>
</dbReference>
<dbReference type="Gene3D" id="2.20.28.10">
    <property type="match status" value="1"/>
</dbReference>
<dbReference type="InterPro" id="IPR024922">
    <property type="entry name" value="Rubredoxin"/>
</dbReference>
<dbReference type="InterPro" id="IPR024934">
    <property type="entry name" value="Rubredoxin-like_dom"/>
</dbReference>
<dbReference type="InterPro" id="IPR024935">
    <property type="entry name" value="Rubredoxin_dom"/>
</dbReference>
<dbReference type="InterPro" id="IPR050526">
    <property type="entry name" value="Rubredoxin_ET"/>
</dbReference>
<dbReference type="InterPro" id="IPR018527">
    <property type="entry name" value="Rubredoxin_Fe_BS"/>
</dbReference>
<dbReference type="NCBIfam" id="NF045768">
    <property type="entry name" value="RubredRD"/>
    <property type="match status" value="1"/>
</dbReference>
<dbReference type="PANTHER" id="PTHR47627">
    <property type="entry name" value="RUBREDOXIN"/>
    <property type="match status" value="1"/>
</dbReference>
<dbReference type="PANTHER" id="PTHR47627:SF1">
    <property type="entry name" value="RUBREDOXIN-1-RELATED"/>
    <property type="match status" value="1"/>
</dbReference>
<dbReference type="Pfam" id="PF00301">
    <property type="entry name" value="Rubredoxin"/>
    <property type="match status" value="1"/>
</dbReference>
<dbReference type="PIRSF" id="PIRSF000071">
    <property type="entry name" value="Rubredoxin"/>
    <property type="match status" value="1"/>
</dbReference>
<dbReference type="PRINTS" id="PR00163">
    <property type="entry name" value="RUBREDOXIN"/>
</dbReference>
<dbReference type="SUPFAM" id="SSF57802">
    <property type="entry name" value="Rubredoxin-like"/>
    <property type="match status" value="1"/>
</dbReference>
<dbReference type="PROSITE" id="PS00202">
    <property type="entry name" value="RUBREDOXIN"/>
    <property type="match status" value="1"/>
</dbReference>
<dbReference type="PROSITE" id="PS50903">
    <property type="entry name" value="RUBREDOXIN_LIKE"/>
    <property type="match status" value="1"/>
</dbReference>
<evidence type="ECO:0000250" key="1"/>
<evidence type="ECO:0000255" key="2">
    <source>
        <dbReference type="PROSITE-ProRule" id="PRU00241"/>
    </source>
</evidence>
<evidence type="ECO:0000269" key="3">
    <source>
    </source>
</evidence>
<evidence type="ECO:0000305" key="4"/>